<feature type="chain" id="PRO_0000103402" description="Error-prone DNA polymerase">
    <location>
        <begin position="1"/>
        <end position="1024"/>
    </location>
</feature>
<protein>
    <recommendedName>
        <fullName evidence="1">Error-prone DNA polymerase</fullName>
        <ecNumber evidence="1">2.7.7.7</ecNumber>
    </recommendedName>
</protein>
<reference key="1">
    <citation type="submission" date="2002-12" db="EMBL/GenBank/DDBJ databases">
        <title>Complete genome sequence of Vibrio vulnificus CMCP6.</title>
        <authorList>
            <person name="Rhee J.H."/>
            <person name="Kim S.Y."/>
            <person name="Chung S.S."/>
            <person name="Kim J.J."/>
            <person name="Moon Y.H."/>
            <person name="Jeong H."/>
            <person name="Choy H.E."/>
        </authorList>
    </citation>
    <scope>NUCLEOTIDE SEQUENCE [LARGE SCALE GENOMIC DNA]</scope>
    <source>
        <strain>CMCP6</strain>
    </source>
</reference>
<accession>Q8D8I6</accession>
<name>DNAE2_VIBVU</name>
<sequence length="1024" mass="116387">MFYAELFCQSNFSFLTGASHPEELIVQANFLGYHSLAITDECSLAGIVRAHSAIKQHQLSVKQIVGSFFKLNTECQFVLLCPNREAYAELCRIITNARRRCEKGQYQLSQWDVMSLKHCLLIWLPTGQTSDEQWATWLSRYQQSRLWLGLQRHLRHDDEHYLHHCQTLANQFDLPITACGGVLMHRPERLPLQHTLTAIRHGCTVEQLGTQLLTNAEQSLRSEKKLRKLFKPQWLAESLYIASLCSFDLDSLRYEYPSELIPDGYTPDSYLEHLVEQGKKLRFPEGVPDAIEQTIQKELALIKEQKYPFFFLTIHDIVMFAKQQGILYQGRGSAANSVVCYCLQITSVDPRQIAVLFERFISKERDEPPDIDVDFEHERREEVIQYIYQKYGRQRAALAATVISYRFKSAVRQVGKALGIEETQLDFFLKNINRRDRQAGWQAQLVELGLQPDSLKGQHFIQLVEEIIGFPRHLSQHVGGFVISSGPLYELVPVENAAMPERTIIQWDKDDLESLKLLKVDVLSLGMLTAIRKCFLSIEQHHQQRLSIADITRRQDDQAVYKMIQKADTIGVFQIESRAQMSMLPRLKPACYYDLVIQIAIVRPGPIQGDMVHPFLKRRDGEEPISYPSVHVQEVLERTLGVPIFQEQVIKLAMVAAGFSGGEADQLRRAMAAWKKNGHVFKFKTKLINGMLERGYELDFAERIFEQICGFGEYGFPESHSASFAVLAYCSAWLKHYYPAEFYTALLNSQPMGFYSPSQLVQDAKRHGIAVLPICVNFSNAEHQLVRLTSGELAIRLGFNLIKGLSHEGITRLLTHRPAQGYQCISEVKQILRQAKDIQSLASANAFYQLADNRYLARWQVMDNLDELPLFQTLPSISNNPLPKPSDYQNVLEDYAATGLSLAEHPVAMLEKAGGLTRFTRANQLNQCSHRSLVTVIGLVTGKQSPGTAAGVTFFTLEDDTGNINVVVWQATSRAQKQAYLTARLLMVKGILEREGDVIHVIAGRLIDLTEKLSGLSPKSREFH</sequence>
<proteinExistence type="inferred from homology"/>
<keyword id="KW-0963">Cytoplasm</keyword>
<keyword id="KW-0227">DNA damage</keyword>
<keyword id="KW-0234">DNA repair</keyword>
<keyword id="KW-0235">DNA replication</keyword>
<keyword id="KW-0239">DNA-directed DNA polymerase</keyword>
<keyword id="KW-0548">Nucleotidyltransferase</keyword>
<keyword id="KW-0808">Transferase</keyword>
<evidence type="ECO:0000255" key="1">
    <source>
        <dbReference type="HAMAP-Rule" id="MF_01902"/>
    </source>
</evidence>
<gene>
    <name evidence="1" type="primary">dnaE2</name>
    <name type="ordered locus">VV1_2989</name>
</gene>
<dbReference type="EC" id="2.7.7.7" evidence="1"/>
<dbReference type="EMBL" id="AE016795">
    <property type="protein sequence ID" value="AAO11318.1"/>
    <property type="molecule type" value="Genomic_DNA"/>
</dbReference>
<dbReference type="RefSeq" id="WP_011080803.1">
    <property type="nucleotide sequence ID" value="NC_004459.3"/>
</dbReference>
<dbReference type="SMR" id="Q8D8I6"/>
<dbReference type="KEGG" id="vvu:VV1_2989"/>
<dbReference type="HOGENOM" id="CLU_001600_4_0_6"/>
<dbReference type="Proteomes" id="UP000002275">
    <property type="component" value="Chromosome 1"/>
</dbReference>
<dbReference type="GO" id="GO:0005737">
    <property type="term" value="C:cytoplasm"/>
    <property type="evidence" value="ECO:0007669"/>
    <property type="project" value="UniProtKB-SubCell"/>
</dbReference>
<dbReference type="GO" id="GO:0008408">
    <property type="term" value="F:3'-5' exonuclease activity"/>
    <property type="evidence" value="ECO:0007669"/>
    <property type="project" value="InterPro"/>
</dbReference>
<dbReference type="GO" id="GO:0003887">
    <property type="term" value="F:DNA-directed DNA polymerase activity"/>
    <property type="evidence" value="ECO:0007669"/>
    <property type="project" value="UniProtKB-UniRule"/>
</dbReference>
<dbReference type="GO" id="GO:0003676">
    <property type="term" value="F:nucleic acid binding"/>
    <property type="evidence" value="ECO:0007669"/>
    <property type="project" value="InterPro"/>
</dbReference>
<dbReference type="GO" id="GO:0006281">
    <property type="term" value="P:DNA repair"/>
    <property type="evidence" value="ECO:0007669"/>
    <property type="project" value="UniProtKB-UniRule"/>
</dbReference>
<dbReference type="GO" id="GO:0006260">
    <property type="term" value="P:DNA replication"/>
    <property type="evidence" value="ECO:0007669"/>
    <property type="project" value="UniProtKB-KW"/>
</dbReference>
<dbReference type="CDD" id="cd04485">
    <property type="entry name" value="DnaE_OBF"/>
    <property type="match status" value="1"/>
</dbReference>
<dbReference type="CDD" id="cd07434">
    <property type="entry name" value="PHP_PolIIIA_DnaE2"/>
    <property type="match status" value="1"/>
</dbReference>
<dbReference type="Gene3D" id="1.10.150.870">
    <property type="match status" value="1"/>
</dbReference>
<dbReference type="Gene3D" id="3.20.20.140">
    <property type="entry name" value="Metal-dependent hydrolases"/>
    <property type="match status" value="1"/>
</dbReference>
<dbReference type="HAMAP" id="MF_01902">
    <property type="entry name" value="DNApol_error_prone"/>
    <property type="match status" value="1"/>
</dbReference>
<dbReference type="InterPro" id="IPR011708">
    <property type="entry name" value="DNA_pol3_alpha_NTPase_dom"/>
</dbReference>
<dbReference type="InterPro" id="IPR040982">
    <property type="entry name" value="DNA_pol3_finger"/>
</dbReference>
<dbReference type="InterPro" id="IPR023073">
    <property type="entry name" value="DnaE2"/>
</dbReference>
<dbReference type="InterPro" id="IPR004805">
    <property type="entry name" value="DnaE2/DnaE/PolC"/>
</dbReference>
<dbReference type="InterPro" id="IPR029460">
    <property type="entry name" value="DNAPol_HHH"/>
</dbReference>
<dbReference type="InterPro" id="IPR004365">
    <property type="entry name" value="NA-bd_OB_tRNA"/>
</dbReference>
<dbReference type="InterPro" id="IPR004013">
    <property type="entry name" value="PHP_dom"/>
</dbReference>
<dbReference type="InterPro" id="IPR003141">
    <property type="entry name" value="Pol/His_phosphatase_N"/>
</dbReference>
<dbReference type="NCBIfam" id="TIGR00594">
    <property type="entry name" value="polc"/>
    <property type="match status" value="1"/>
</dbReference>
<dbReference type="NCBIfam" id="NF004225">
    <property type="entry name" value="PRK05672.1"/>
    <property type="match status" value="1"/>
</dbReference>
<dbReference type="PANTHER" id="PTHR32294">
    <property type="entry name" value="DNA POLYMERASE III SUBUNIT ALPHA"/>
    <property type="match status" value="1"/>
</dbReference>
<dbReference type="PANTHER" id="PTHR32294:SF4">
    <property type="entry name" value="ERROR-PRONE DNA POLYMERASE"/>
    <property type="match status" value="1"/>
</dbReference>
<dbReference type="Pfam" id="PF07733">
    <property type="entry name" value="DNA_pol3_alpha"/>
    <property type="match status" value="1"/>
</dbReference>
<dbReference type="Pfam" id="PF17657">
    <property type="entry name" value="DNA_pol3_finger"/>
    <property type="match status" value="1"/>
</dbReference>
<dbReference type="Pfam" id="PF14579">
    <property type="entry name" value="HHH_6"/>
    <property type="match status" value="1"/>
</dbReference>
<dbReference type="Pfam" id="PF02811">
    <property type="entry name" value="PHP"/>
    <property type="match status" value="1"/>
</dbReference>
<dbReference type="Pfam" id="PF01336">
    <property type="entry name" value="tRNA_anti-codon"/>
    <property type="match status" value="1"/>
</dbReference>
<dbReference type="SMART" id="SM00481">
    <property type="entry name" value="POLIIIAc"/>
    <property type="match status" value="1"/>
</dbReference>
<comment type="function">
    <text evidence="1">DNA polymerase involved in damage-induced mutagenesis and translesion synthesis (TLS). It is not the major replicative DNA polymerase.</text>
</comment>
<comment type="catalytic activity">
    <reaction evidence="1">
        <text>DNA(n) + a 2'-deoxyribonucleoside 5'-triphosphate = DNA(n+1) + diphosphate</text>
        <dbReference type="Rhea" id="RHEA:22508"/>
        <dbReference type="Rhea" id="RHEA-COMP:17339"/>
        <dbReference type="Rhea" id="RHEA-COMP:17340"/>
        <dbReference type="ChEBI" id="CHEBI:33019"/>
        <dbReference type="ChEBI" id="CHEBI:61560"/>
        <dbReference type="ChEBI" id="CHEBI:173112"/>
        <dbReference type="EC" id="2.7.7.7"/>
    </reaction>
</comment>
<comment type="subcellular location">
    <subcellularLocation>
        <location evidence="1">Cytoplasm</location>
    </subcellularLocation>
</comment>
<comment type="similarity">
    <text evidence="1">Belongs to the DNA polymerase type-C family. DnaE2 subfamily.</text>
</comment>
<organism>
    <name type="scientific">Vibrio vulnificus (strain CMCP6)</name>
    <dbReference type="NCBI Taxonomy" id="216895"/>
    <lineage>
        <taxon>Bacteria</taxon>
        <taxon>Pseudomonadati</taxon>
        <taxon>Pseudomonadota</taxon>
        <taxon>Gammaproteobacteria</taxon>
        <taxon>Vibrionales</taxon>
        <taxon>Vibrionaceae</taxon>
        <taxon>Vibrio</taxon>
    </lineage>
</organism>